<comment type="catalytic activity">
    <reaction evidence="2">
        <text>(2R,3R)-tartrate = oxaloacetate + H2O</text>
        <dbReference type="Rhea" id="RHEA:15413"/>
        <dbReference type="ChEBI" id="CHEBI:15377"/>
        <dbReference type="ChEBI" id="CHEBI:16452"/>
        <dbReference type="ChEBI" id="CHEBI:30924"/>
        <dbReference type="EC" id="4.2.1.32"/>
    </reaction>
</comment>
<comment type="cofactor">
    <cofactor evidence="2">
        <name>iron-sulfur cluster</name>
        <dbReference type="ChEBI" id="CHEBI:30408"/>
    </cofactor>
</comment>
<comment type="subunit">
    <text evidence="2">Tetramer of two alpha and two beta subunits.</text>
</comment>
<comment type="similarity">
    <text evidence="3">Belongs to the class-I fumarase family.</text>
</comment>
<protein>
    <recommendedName>
        <fullName evidence="2">Putative L(+)-tartrate dehydratase subunit alpha</fullName>
        <shortName evidence="2">L-TTD alpha</shortName>
        <ecNumber evidence="2">4.2.1.32</ecNumber>
    </recommendedName>
</protein>
<keyword id="KW-0002">3D-structure</keyword>
<keyword id="KW-0004">4Fe-4S</keyword>
<keyword id="KW-0408">Iron</keyword>
<keyword id="KW-0411">Iron-sulfur</keyword>
<keyword id="KW-0456">Lyase</keyword>
<keyword id="KW-0479">Metal-binding</keyword>
<keyword id="KW-1185">Reference proteome</keyword>
<sequence>MKISDVVVELFREAAIYLPEDVKNALEEAYKKESSEISKNTLKAIIENNKIAEETQVPLCQDTGVPIVFLKIGKNINSSEIMKIIEEIKEGVKKATEEVPLRPNVVHPLTRENFKTNVGLNSPFINIEFDESLDREIEIIAFPKGAGSENMSALKMLKPSDGIEGIKNFVLETIANAGGKPCPPIVVGIGIGGTADVALKLAKKALLRKIGERHRDKEIANLEKELLEKINSLGIGAMGLGGDITALDVFIEIAGCHTASLPVGICIQCWADRRAIKRIKLDAKL</sequence>
<accession>Q58690</accession>
<dbReference type="EC" id="4.2.1.32" evidence="2"/>
<dbReference type="EMBL" id="L77117">
    <property type="protein sequence ID" value="AAB99301.1"/>
    <property type="molecule type" value="Genomic_DNA"/>
</dbReference>
<dbReference type="PIR" id="E64461">
    <property type="entry name" value="E64461"/>
</dbReference>
<dbReference type="RefSeq" id="WP_010870811.1">
    <property type="nucleotide sequence ID" value="NC_000909.1"/>
</dbReference>
<dbReference type="PDB" id="7XKY">
    <property type="method" value="X-ray"/>
    <property type="resolution" value="2.46 A"/>
    <property type="chains" value="A=2-285"/>
</dbReference>
<dbReference type="PDBsum" id="7XKY"/>
<dbReference type="SMR" id="Q58690"/>
<dbReference type="FunCoup" id="Q58690">
    <property type="interactions" value="94"/>
</dbReference>
<dbReference type="STRING" id="243232.MJ_1294"/>
<dbReference type="PaxDb" id="243232-MJ_1294"/>
<dbReference type="EnsemblBacteria" id="AAB99301">
    <property type="protein sequence ID" value="AAB99301"/>
    <property type="gene ID" value="MJ_1294"/>
</dbReference>
<dbReference type="GeneID" id="1452196"/>
<dbReference type="KEGG" id="mja:MJ_1294"/>
<dbReference type="eggNOG" id="arCOG04407">
    <property type="taxonomic scope" value="Archaea"/>
</dbReference>
<dbReference type="HOGENOM" id="CLU_041245_0_0_2"/>
<dbReference type="InParanoid" id="Q58690"/>
<dbReference type="OrthoDB" id="371925at2157"/>
<dbReference type="PhylomeDB" id="Q58690"/>
<dbReference type="Proteomes" id="UP000000805">
    <property type="component" value="Chromosome"/>
</dbReference>
<dbReference type="GO" id="GO:0005829">
    <property type="term" value="C:cytosol"/>
    <property type="evidence" value="ECO:0000318"/>
    <property type="project" value="GO_Central"/>
</dbReference>
<dbReference type="GO" id="GO:0051539">
    <property type="term" value="F:4 iron, 4 sulfur cluster binding"/>
    <property type="evidence" value="ECO:0007669"/>
    <property type="project" value="UniProtKB-KW"/>
</dbReference>
<dbReference type="GO" id="GO:0004333">
    <property type="term" value="F:fumarate hydratase activity"/>
    <property type="evidence" value="ECO:0000318"/>
    <property type="project" value="GO_Central"/>
</dbReference>
<dbReference type="GO" id="GO:0008730">
    <property type="term" value="F:L(+)-tartrate dehydratase activity"/>
    <property type="evidence" value="ECO:0007669"/>
    <property type="project" value="UniProtKB-EC"/>
</dbReference>
<dbReference type="GO" id="GO:0046872">
    <property type="term" value="F:metal ion binding"/>
    <property type="evidence" value="ECO:0007669"/>
    <property type="project" value="UniProtKB-KW"/>
</dbReference>
<dbReference type="GO" id="GO:0006099">
    <property type="term" value="P:tricarboxylic acid cycle"/>
    <property type="evidence" value="ECO:0000318"/>
    <property type="project" value="GO_Central"/>
</dbReference>
<dbReference type="InterPro" id="IPR051208">
    <property type="entry name" value="Class-I_Fumarase/Tartrate_DH"/>
</dbReference>
<dbReference type="InterPro" id="IPR004646">
    <property type="entry name" value="Fe-S_hydro-lyase_TtdA-typ_cat"/>
</dbReference>
<dbReference type="NCBIfam" id="NF004885">
    <property type="entry name" value="PRK06246.1"/>
    <property type="match status" value="1"/>
</dbReference>
<dbReference type="NCBIfam" id="TIGR00722">
    <property type="entry name" value="ttdA_fumA_fumB"/>
    <property type="match status" value="1"/>
</dbReference>
<dbReference type="PANTHER" id="PTHR30389">
    <property type="entry name" value="FUMARATE HYDRATASE-RELATED"/>
    <property type="match status" value="1"/>
</dbReference>
<dbReference type="PANTHER" id="PTHR30389:SF17">
    <property type="entry name" value="L(+)-TARTRATE DEHYDRATASE SUBUNIT ALPHA-RELATED"/>
    <property type="match status" value="1"/>
</dbReference>
<dbReference type="Pfam" id="PF05681">
    <property type="entry name" value="Fumerase"/>
    <property type="match status" value="1"/>
</dbReference>
<name>TTDA_METJA</name>
<reference key="1">
    <citation type="journal article" date="1996" name="Science">
        <title>Complete genome sequence of the methanogenic archaeon, Methanococcus jannaschii.</title>
        <authorList>
            <person name="Bult C.J."/>
            <person name="White O."/>
            <person name="Olsen G.J."/>
            <person name="Zhou L."/>
            <person name="Fleischmann R.D."/>
            <person name="Sutton G.G."/>
            <person name="Blake J.A."/>
            <person name="FitzGerald L.M."/>
            <person name="Clayton R.A."/>
            <person name="Gocayne J.D."/>
            <person name="Kerlavage A.R."/>
            <person name="Dougherty B.A."/>
            <person name="Tomb J.-F."/>
            <person name="Adams M.D."/>
            <person name="Reich C.I."/>
            <person name="Overbeek R."/>
            <person name="Kirkness E.F."/>
            <person name="Weinstock K.G."/>
            <person name="Merrick J.M."/>
            <person name="Glodek A."/>
            <person name="Scott J.L."/>
            <person name="Geoghagen N.S.M."/>
            <person name="Weidman J.F."/>
            <person name="Fuhrmann J.L."/>
            <person name="Nguyen D."/>
            <person name="Utterback T.R."/>
            <person name="Kelley J.M."/>
            <person name="Peterson J.D."/>
            <person name="Sadow P.W."/>
            <person name="Hanna M.C."/>
            <person name="Cotton M.D."/>
            <person name="Roberts K.M."/>
            <person name="Hurst M.A."/>
            <person name="Kaine B.P."/>
            <person name="Borodovsky M."/>
            <person name="Klenk H.-P."/>
            <person name="Fraser C.M."/>
            <person name="Smith H.O."/>
            <person name="Woese C.R."/>
            <person name="Venter J.C."/>
        </authorList>
    </citation>
    <scope>NUCLEOTIDE SEQUENCE [LARGE SCALE GENOMIC DNA]</scope>
    <source>
        <strain>ATCC 43067 / DSM 2661 / JAL-1 / JCM 10045 / NBRC 100440</strain>
    </source>
</reference>
<organism>
    <name type="scientific">Methanocaldococcus jannaschii (strain ATCC 43067 / DSM 2661 / JAL-1 / JCM 10045 / NBRC 100440)</name>
    <name type="common">Methanococcus jannaschii</name>
    <dbReference type="NCBI Taxonomy" id="243232"/>
    <lineage>
        <taxon>Archaea</taxon>
        <taxon>Methanobacteriati</taxon>
        <taxon>Methanobacteriota</taxon>
        <taxon>Methanomada group</taxon>
        <taxon>Methanococci</taxon>
        <taxon>Methanococcales</taxon>
        <taxon>Methanocaldococcaceae</taxon>
        <taxon>Methanocaldococcus</taxon>
    </lineage>
</organism>
<proteinExistence type="evidence at protein level"/>
<evidence type="ECO:0000250" key="1">
    <source>
        <dbReference type="UniProtKB" id="E9AE57"/>
    </source>
</evidence>
<evidence type="ECO:0000250" key="2">
    <source>
        <dbReference type="UniProtKB" id="P05847"/>
    </source>
</evidence>
<evidence type="ECO:0000305" key="3"/>
<evidence type="ECO:0007829" key="4">
    <source>
        <dbReference type="PDB" id="7XKY"/>
    </source>
</evidence>
<gene>
    <name type="ordered locus">MJ1294</name>
</gene>
<feature type="chain" id="PRO_0000195661" description="Putative L(+)-tartrate dehydratase subunit alpha">
    <location>
        <begin position="1"/>
        <end position="285"/>
    </location>
</feature>
<feature type="binding site" evidence="1">
    <location>
        <position position="60"/>
    </location>
    <ligand>
        <name>iron-sulfur cluster</name>
        <dbReference type="ChEBI" id="CHEBI:30408"/>
    </ligand>
</feature>
<feature type="binding site" evidence="1">
    <location>
        <position position="182"/>
    </location>
    <ligand>
        <name>iron-sulfur cluster</name>
        <dbReference type="ChEBI" id="CHEBI:30408"/>
    </ligand>
</feature>
<feature type="binding site" evidence="1">
    <location>
        <position position="269"/>
    </location>
    <ligand>
        <name>iron-sulfur cluster</name>
        <dbReference type="ChEBI" id="CHEBI:30408"/>
    </ligand>
</feature>
<feature type="helix" evidence="4">
    <location>
        <begin position="3"/>
        <end position="16"/>
    </location>
</feature>
<feature type="helix" evidence="4">
    <location>
        <begin position="20"/>
        <end position="32"/>
    </location>
</feature>
<feature type="helix" evidence="4">
    <location>
        <begin position="36"/>
        <end position="55"/>
    </location>
</feature>
<feature type="strand" evidence="4">
    <location>
        <begin position="59"/>
        <end position="61"/>
    </location>
</feature>
<feature type="strand" evidence="4">
    <location>
        <begin position="65"/>
        <end position="75"/>
    </location>
</feature>
<feature type="helix" evidence="4">
    <location>
        <begin position="78"/>
        <end position="98"/>
    </location>
</feature>
<feature type="turn" evidence="4">
    <location>
        <begin position="108"/>
        <end position="110"/>
    </location>
</feature>
<feature type="strand" evidence="4">
    <location>
        <begin position="115"/>
        <end position="117"/>
    </location>
</feature>
<feature type="strand" evidence="4">
    <location>
        <begin position="119"/>
        <end position="121"/>
    </location>
</feature>
<feature type="strand" evidence="4">
    <location>
        <begin position="123"/>
        <end position="144"/>
    </location>
</feature>
<feature type="helix" evidence="4">
    <location>
        <begin position="146"/>
        <end position="149"/>
    </location>
</feature>
<feature type="strand" evidence="4">
    <location>
        <begin position="153"/>
        <end position="157"/>
    </location>
</feature>
<feature type="helix" evidence="4">
    <location>
        <begin position="159"/>
        <end position="161"/>
    </location>
</feature>
<feature type="helix" evidence="4">
    <location>
        <begin position="162"/>
        <end position="177"/>
    </location>
</feature>
<feature type="turn" evidence="4">
    <location>
        <begin position="178"/>
        <end position="181"/>
    </location>
</feature>
<feature type="strand" evidence="4">
    <location>
        <begin position="183"/>
        <end position="194"/>
    </location>
</feature>
<feature type="helix" evidence="4">
    <location>
        <begin position="195"/>
        <end position="205"/>
    </location>
</feature>
<feature type="helix" evidence="4">
    <location>
        <begin position="217"/>
        <end position="231"/>
    </location>
</feature>
<feature type="helix" evidence="4">
    <location>
        <begin position="237"/>
        <end position="239"/>
    </location>
</feature>
<feature type="strand" evidence="4">
    <location>
        <begin position="245"/>
        <end position="253"/>
    </location>
</feature>
<feature type="strand" evidence="4">
    <location>
        <begin position="261"/>
        <end position="268"/>
    </location>
</feature>
<feature type="strand" evidence="4">
    <location>
        <begin position="275"/>
        <end position="280"/>
    </location>
</feature>